<name>NPR3_DEBHA</name>
<proteinExistence type="inferred from homology"/>
<feature type="signal peptide" evidence="2">
    <location>
        <begin position="1"/>
        <end position="21"/>
    </location>
</feature>
<feature type="chain" id="PRO_0000301799" description="Nitrogen permease regulator 3">
    <location>
        <begin position="22"/>
        <end position="821"/>
    </location>
</feature>
<feature type="region of interest" description="Disordered" evidence="3">
    <location>
        <begin position="29"/>
        <end position="64"/>
    </location>
</feature>
<feature type="region of interest" description="Disordered" evidence="3">
    <location>
        <begin position="116"/>
        <end position="194"/>
    </location>
</feature>
<feature type="region of interest" description="Disordered" evidence="3">
    <location>
        <begin position="246"/>
        <end position="283"/>
    </location>
</feature>
<feature type="region of interest" description="Disordered" evidence="3">
    <location>
        <begin position="654"/>
        <end position="694"/>
    </location>
</feature>
<feature type="compositionally biased region" description="Basic and acidic residues" evidence="3">
    <location>
        <begin position="116"/>
        <end position="142"/>
    </location>
</feature>
<feature type="compositionally biased region" description="Low complexity" evidence="3">
    <location>
        <begin position="170"/>
        <end position="192"/>
    </location>
</feature>
<feature type="compositionally biased region" description="Basic residues" evidence="3">
    <location>
        <begin position="249"/>
        <end position="266"/>
    </location>
</feature>
<feature type="compositionally biased region" description="Polar residues" evidence="3">
    <location>
        <begin position="669"/>
        <end position="688"/>
    </location>
</feature>
<gene>
    <name type="primary">NPR3</name>
    <name type="synonym">RMD11</name>
    <name type="ordered locus">DEHA2E02046g</name>
</gene>
<comment type="function">
    <text evidence="1">Mediates inactivation of the TORC1 complex in response to amino acid starvation. Required for meiotic nuclear division (By similarity).</text>
</comment>
<comment type="similarity">
    <text evidence="4">Belongs to the NPR3 family.</text>
</comment>
<evidence type="ECO:0000250" key="1"/>
<evidence type="ECO:0000255" key="2"/>
<evidence type="ECO:0000256" key="3">
    <source>
        <dbReference type="SAM" id="MobiDB-lite"/>
    </source>
</evidence>
<evidence type="ECO:0000305" key="4"/>
<dbReference type="EMBL" id="CR382137">
    <property type="protein sequence ID" value="CAG87633.2"/>
    <property type="molecule type" value="Genomic_DNA"/>
</dbReference>
<dbReference type="RefSeq" id="XP_459422.2">
    <property type="nucleotide sequence ID" value="XM_459422.1"/>
</dbReference>
<dbReference type="SMR" id="Q6BQU8"/>
<dbReference type="FunCoup" id="Q6BQU8">
    <property type="interactions" value="126"/>
</dbReference>
<dbReference type="STRING" id="284592.Q6BQU8"/>
<dbReference type="GeneID" id="2902676"/>
<dbReference type="KEGG" id="dha:DEHA2E02046g"/>
<dbReference type="VEuPathDB" id="FungiDB:DEHA2E02046g"/>
<dbReference type="eggNOG" id="ENOG502QW35">
    <property type="taxonomic scope" value="Eukaryota"/>
</dbReference>
<dbReference type="HOGENOM" id="CLU_014314_0_0_1"/>
<dbReference type="InParanoid" id="Q6BQU8"/>
<dbReference type="OMA" id="CNLAFRY"/>
<dbReference type="OrthoDB" id="18648at2759"/>
<dbReference type="Proteomes" id="UP000000599">
    <property type="component" value="Chromosome E"/>
</dbReference>
<dbReference type="GO" id="GO:1990130">
    <property type="term" value="C:GATOR1 complex"/>
    <property type="evidence" value="ECO:0007669"/>
    <property type="project" value="TreeGrafter"/>
</dbReference>
<dbReference type="GO" id="GO:0034198">
    <property type="term" value="P:cellular response to amino acid starvation"/>
    <property type="evidence" value="ECO:0007669"/>
    <property type="project" value="TreeGrafter"/>
</dbReference>
<dbReference type="GO" id="GO:0051321">
    <property type="term" value="P:meiotic cell cycle"/>
    <property type="evidence" value="ECO:0007669"/>
    <property type="project" value="UniProtKB-KW"/>
</dbReference>
<dbReference type="GO" id="GO:1904262">
    <property type="term" value="P:negative regulation of TORC1 signaling"/>
    <property type="evidence" value="ECO:0007669"/>
    <property type="project" value="TreeGrafter"/>
</dbReference>
<dbReference type="GO" id="GO:0010508">
    <property type="term" value="P:positive regulation of autophagy"/>
    <property type="evidence" value="ECO:0007669"/>
    <property type="project" value="TreeGrafter"/>
</dbReference>
<dbReference type="GO" id="GO:0038202">
    <property type="term" value="P:TORC1 signaling"/>
    <property type="evidence" value="ECO:0007669"/>
    <property type="project" value="TreeGrafter"/>
</dbReference>
<dbReference type="InterPro" id="IPR056603">
    <property type="entry name" value="HTH_NPRL3"/>
</dbReference>
<dbReference type="InterPro" id="IPR005365">
    <property type="entry name" value="Npr3"/>
</dbReference>
<dbReference type="PANTHER" id="PTHR13153">
    <property type="entry name" value="CGTHBA PROTEIN -14 GENE PROTEIN"/>
    <property type="match status" value="1"/>
</dbReference>
<dbReference type="PANTHER" id="PTHR13153:SF5">
    <property type="entry name" value="GATOR COMPLEX PROTEIN NPRL3"/>
    <property type="match status" value="1"/>
</dbReference>
<dbReference type="Pfam" id="PF24064">
    <property type="entry name" value="HTH_NPRL3"/>
    <property type="match status" value="1"/>
</dbReference>
<dbReference type="Pfam" id="PF03666">
    <property type="entry name" value="NPR3"/>
    <property type="match status" value="1"/>
</dbReference>
<organism>
    <name type="scientific">Debaryomyces hansenii (strain ATCC 36239 / CBS 767 / BCRC 21394 / JCM 1990 / NBRC 0083 / IGC 2968)</name>
    <name type="common">Yeast</name>
    <name type="synonym">Torulaspora hansenii</name>
    <dbReference type="NCBI Taxonomy" id="284592"/>
    <lineage>
        <taxon>Eukaryota</taxon>
        <taxon>Fungi</taxon>
        <taxon>Dikarya</taxon>
        <taxon>Ascomycota</taxon>
        <taxon>Saccharomycotina</taxon>
        <taxon>Pichiomycetes</taxon>
        <taxon>Debaryomycetaceae</taxon>
        <taxon>Debaryomyces</taxon>
    </lineage>
</organism>
<keyword id="KW-0469">Meiosis</keyword>
<keyword id="KW-1185">Reference proteome</keyword>
<keyword id="KW-0732">Signal</keyword>
<accession>Q6BQU8</accession>
<protein>
    <recommendedName>
        <fullName>Nitrogen permease regulator 3</fullName>
    </recommendedName>
    <alternativeName>
        <fullName>Required for meiotic nuclear division protein 11</fullName>
    </alternativeName>
</protein>
<sequence>MSLNLPNPSILGILLVVSTHSGPQLVFQYPPDLSNDSKKSSNLKRTNKTSTLQRKDSDSDELDIDDDDYIADNENDEEFVNADNDEEKEWDSRKMNYYLGTKSDLLSFLDEQEKFRQTSQERNKIYGHKQSDSHIDPDEIKSLHRNSKSGSSDKQIESPKLEASNSNNLKKTISSISDSQKSSTSKASTSGIPPVSPITSSTILGFEADYLCEMLCPPKQMCNSRFEIMIDDLVFLGLPIHSYDNGSWKSKHSHRPKSGKSSKGRSKNAADNASIDEGIDYETTSKSQSKNSMSMFHLVFIMNPPIIECNYRIDEMFHYVISRLSLVLRYEQSKHEYVWNQIRMIYNLKEEFRNQATMANLTKYLTDKSSLCKLISECFTQISRSNIANLSINNKLRSFQIPIKTEFHSLPDSTVPYLPGSHLSSTVNMLANTGLISVGETIRYDVNNLNSGGLDDFDDIDDNKSDSNADDIIYYALLLLDDPETIIRDIKAQQQSTLANFIRMIKPTESLLKLANKLKQQASDNGFSLDAGQIKSFAFHLIYWRRARVILPISTRSVYIVSPMAPITLKFHHDIFIFKKTFPALPSLPHFLKLLSNSSKPRQLATVIPSKDHRDAYLNALSWLIRYGYVTQLHTFIWLKISRKIKMKVEEDLENEGANNKRKKPSATADPNISNKLNAGTDNTSKTESNPEDIQRKMSQLRMINRNNNGNPTSYEQEIDNIEKKLLSPSIGLNLVLEDEGDTIIIDPGRASSLERRWINKVISEECNLSPELTVKFYELLKYMNGKNSLELLLLKENVSRQELRTLLFAIEDHIISVRHW</sequence>
<reference key="1">
    <citation type="journal article" date="2004" name="Nature">
        <title>Genome evolution in yeasts.</title>
        <authorList>
            <person name="Dujon B."/>
            <person name="Sherman D."/>
            <person name="Fischer G."/>
            <person name="Durrens P."/>
            <person name="Casaregola S."/>
            <person name="Lafontaine I."/>
            <person name="de Montigny J."/>
            <person name="Marck C."/>
            <person name="Neuveglise C."/>
            <person name="Talla E."/>
            <person name="Goffard N."/>
            <person name="Frangeul L."/>
            <person name="Aigle M."/>
            <person name="Anthouard V."/>
            <person name="Babour A."/>
            <person name="Barbe V."/>
            <person name="Barnay S."/>
            <person name="Blanchin S."/>
            <person name="Beckerich J.-M."/>
            <person name="Beyne E."/>
            <person name="Bleykasten C."/>
            <person name="Boisrame A."/>
            <person name="Boyer J."/>
            <person name="Cattolico L."/>
            <person name="Confanioleri F."/>
            <person name="de Daruvar A."/>
            <person name="Despons L."/>
            <person name="Fabre E."/>
            <person name="Fairhead C."/>
            <person name="Ferry-Dumazet H."/>
            <person name="Groppi A."/>
            <person name="Hantraye F."/>
            <person name="Hennequin C."/>
            <person name="Jauniaux N."/>
            <person name="Joyet P."/>
            <person name="Kachouri R."/>
            <person name="Kerrest A."/>
            <person name="Koszul R."/>
            <person name="Lemaire M."/>
            <person name="Lesur I."/>
            <person name="Ma L."/>
            <person name="Muller H."/>
            <person name="Nicaud J.-M."/>
            <person name="Nikolski M."/>
            <person name="Oztas S."/>
            <person name="Ozier-Kalogeropoulos O."/>
            <person name="Pellenz S."/>
            <person name="Potier S."/>
            <person name="Richard G.-F."/>
            <person name="Straub M.-L."/>
            <person name="Suleau A."/>
            <person name="Swennen D."/>
            <person name="Tekaia F."/>
            <person name="Wesolowski-Louvel M."/>
            <person name="Westhof E."/>
            <person name="Wirth B."/>
            <person name="Zeniou-Meyer M."/>
            <person name="Zivanovic Y."/>
            <person name="Bolotin-Fukuhara M."/>
            <person name="Thierry A."/>
            <person name="Bouchier C."/>
            <person name="Caudron B."/>
            <person name="Scarpelli C."/>
            <person name="Gaillardin C."/>
            <person name="Weissenbach J."/>
            <person name="Wincker P."/>
            <person name="Souciet J.-L."/>
        </authorList>
    </citation>
    <scope>NUCLEOTIDE SEQUENCE [LARGE SCALE GENOMIC DNA]</scope>
    <source>
        <strain>ATCC 36239 / CBS 767 / BCRC 21394 / JCM 1990 / NBRC 0083 / IGC 2968</strain>
    </source>
</reference>